<dbReference type="EMBL" id="CP001618">
    <property type="protein sequence ID" value="ACQ81405.1"/>
    <property type="molecule type" value="Genomic_DNA"/>
</dbReference>
<dbReference type="RefSeq" id="WP_015883645.1">
    <property type="nucleotide sequence ID" value="NC_012669.1"/>
</dbReference>
<dbReference type="SMR" id="C5C0K9"/>
<dbReference type="STRING" id="471853.Bcav_3161"/>
<dbReference type="KEGG" id="bcv:Bcav_3161"/>
<dbReference type="eggNOG" id="COG0080">
    <property type="taxonomic scope" value="Bacteria"/>
</dbReference>
<dbReference type="HOGENOM" id="CLU_074237_2_1_11"/>
<dbReference type="OrthoDB" id="9802408at2"/>
<dbReference type="Proteomes" id="UP000007962">
    <property type="component" value="Chromosome"/>
</dbReference>
<dbReference type="GO" id="GO:0022625">
    <property type="term" value="C:cytosolic large ribosomal subunit"/>
    <property type="evidence" value="ECO:0007669"/>
    <property type="project" value="TreeGrafter"/>
</dbReference>
<dbReference type="GO" id="GO:0070180">
    <property type="term" value="F:large ribosomal subunit rRNA binding"/>
    <property type="evidence" value="ECO:0007669"/>
    <property type="project" value="UniProtKB-UniRule"/>
</dbReference>
<dbReference type="GO" id="GO:0003735">
    <property type="term" value="F:structural constituent of ribosome"/>
    <property type="evidence" value="ECO:0007669"/>
    <property type="project" value="InterPro"/>
</dbReference>
<dbReference type="GO" id="GO:0006412">
    <property type="term" value="P:translation"/>
    <property type="evidence" value="ECO:0007669"/>
    <property type="project" value="UniProtKB-UniRule"/>
</dbReference>
<dbReference type="CDD" id="cd00349">
    <property type="entry name" value="Ribosomal_L11"/>
    <property type="match status" value="1"/>
</dbReference>
<dbReference type="FunFam" id="1.10.10.250:FF:000001">
    <property type="entry name" value="50S ribosomal protein L11"/>
    <property type="match status" value="1"/>
</dbReference>
<dbReference type="FunFam" id="3.30.1550.10:FF:000001">
    <property type="entry name" value="50S ribosomal protein L11"/>
    <property type="match status" value="1"/>
</dbReference>
<dbReference type="Gene3D" id="1.10.10.250">
    <property type="entry name" value="Ribosomal protein L11, C-terminal domain"/>
    <property type="match status" value="1"/>
</dbReference>
<dbReference type="Gene3D" id="3.30.1550.10">
    <property type="entry name" value="Ribosomal protein L11/L12, N-terminal domain"/>
    <property type="match status" value="1"/>
</dbReference>
<dbReference type="HAMAP" id="MF_00736">
    <property type="entry name" value="Ribosomal_uL11"/>
    <property type="match status" value="1"/>
</dbReference>
<dbReference type="InterPro" id="IPR000911">
    <property type="entry name" value="Ribosomal_uL11"/>
</dbReference>
<dbReference type="InterPro" id="IPR006519">
    <property type="entry name" value="Ribosomal_uL11_bac-typ"/>
</dbReference>
<dbReference type="InterPro" id="IPR020783">
    <property type="entry name" value="Ribosomal_uL11_C"/>
</dbReference>
<dbReference type="InterPro" id="IPR036769">
    <property type="entry name" value="Ribosomal_uL11_C_sf"/>
</dbReference>
<dbReference type="InterPro" id="IPR020785">
    <property type="entry name" value="Ribosomal_uL11_CS"/>
</dbReference>
<dbReference type="InterPro" id="IPR020784">
    <property type="entry name" value="Ribosomal_uL11_N"/>
</dbReference>
<dbReference type="InterPro" id="IPR036796">
    <property type="entry name" value="Ribosomal_uL11_N_sf"/>
</dbReference>
<dbReference type="NCBIfam" id="TIGR01632">
    <property type="entry name" value="L11_bact"/>
    <property type="match status" value="1"/>
</dbReference>
<dbReference type="PANTHER" id="PTHR11661">
    <property type="entry name" value="60S RIBOSOMAL PROTEIN L12"/>
    <property type="match status" value="1"/>
</dbReference>
<dbReference type="PANTHER" id="PTHR11661:SF1">
    <property type="entry name" value="LARGE RIBOSOMAL SUBUNIT PROTEIN UL11M"/>
    <property type="match status" value="1"/>
</dbReference>
<dbReference type="Pfam" id="PF00298">
    <property type="entry name" value="Ribosomal_L11"/>
    <property type="match status" value="1"/>
</dbReference>
<dbReference type="Pfam" id="PF03946">
    <property type="entry name" value="Ribosomal_L11_N"/>
    <property type="match status" value="1"/>
</dbReference>
<dbReference type="SMART" id="SM00649">
    <property type="entry name" value="RL11"/>
    <property type="match status" value="1"/>
</dbReference>
<dbReference type="SUPFAM" id="SSF54747">
    <property type="entry name" value="Ribosomal L11/L12e N-terminal domain"/>
    <property type="match status" value="1"/>
</dbReference>
<dbReference type="SUPFAM" id="SSF46906">
    <property type="entry name" value="Ribosomal protein L11, C-terminal domain"/>
    <property type="match status" value="1"/>
</dbReference>
<dbReference type="PROSITE" id="PS00359">
    <property type="entry name" value="RIBOSOMAL_L11"/>
    <property type="match status" value="1"/>
</dbReference>
<gene>
    <name evidence="1" type="primary">rplK</name>
    <name type="ordered locus">Bcav_3161</name>
</gene>
<evidence type="ECO:0000255" key="1">
    <source>
        <dbReference type="HAMAP-Rule" id="MF_00736"/>
    </source>
</evidence>
<evidence type="ECO:0000305" key="2"/>
<organism>
    <name type="scientific">Beutenbergia cavernae (strain ATCC BAA-8 / DSM 12333 / CCUG 43141 / JCM 11478 / NBRC 16432 / NCIMB 13614 / HKI 0122)</name>
    <dbReference type="NCBI Taxonomy" id="471853"/>
    <lineage>
        <taxon>Bacteria</taxon>
        <taxon>Bacillati</taxon>
        <taxon>Actinomycetota</taxon>
        <taxon>Actinomycetes</taxon>
        <taxon>Micrococcales</taxon>
        <taxon>Beutenbergiaceae</taxon>
        <taxon>Beutenbergia</taxon>
    </lineage>
</organism>
<reference key="1">
    <citation type="journal article" date="2009" name="Stand. Genomic Sci.">
        <title>Complete genome sequence of Beutenbergia cavernae type strain (HKI 0122).</title>
        <authorList>
            <person name="Land M."/>
            <person name="Pukall R."/>
            <person name="Abt B."/>
            <person name="Goker M."/>
            <person name="Rohde M."/>
            <person name="Glavina Del Rio T."/>
            <person name="Tice H."/>
            <person name="Copeland A."/>
            <person name="Cheng J.F."/>
            <person name="Lucas S."/>
            <person name="Chen F."/>
            <person name="Nolan M."/>
            <person name="Bruce D."/>
            <person name="Goodwin L."/>
            <person name="Pitluck S."/>
            <person name="Ivanova N."/>
            <person name="Mavromatis K."/>
            <person name="Ovchinnikova G."/>
            <person name="Pati A."/>
            <person name="Chen A."/>
            <person name="Palaniappan K."/>
            <person name="Hauser L."/>
            <person name="Chang Y.J."/>
            <person name="Jefferies C.C."/>
            <person name="Saunders E."/>
            <person name="Brettin T."/>
            <person name="Detter J.C."/>
            <person name="Han C."/>
            <person name="Chain P."/>
            <person name="Bristow J."/>
            <person name="Eisen J.A."/>
            <person name="Markowitz V."/>
            <person name="Hugenholtz P."/>
            <person name="Kyrpides N.C."/>
            <person name="Klenk H.P."/>
            <person name="Lapidus A."/>
        </authorList>
    </citation>
    <scope>NUCLEOTIDE SEQUENCE [LARGE SCALE GENOMIC DNA]</scope>
    <source>
        <strain>ATCC BAA-8 / DSM 12333 / CCUG 43141 / JCM 11478 / NBRC 16432 / NCIMB 13614 / HKI 0122</strain>
    </source>
</reference>
<proteinExistence type="inferred from homology"/>
<comment type="function">
    <text evidence="1">Forms part of the ribosomal stalk which helps the ribosome interact with GTP-bound translation factors.</text>
</comment>
<comment type="subunit">
    <text evidence="1">Part of the ribosomal stalk of the 50S ribosomal subunit. Interacts with L10 and the large rRNA to form the base of the stalk. L10 forms an elongated spine to which L12 dimers bind in a sequential fashion forming a multimeric L10(L12)X complex.</text>
</comment>
<comment type="PTM">
    <text evidence="1">One or more lysine residues are methylated.</text>
</comment>
<comment type="similarity">
    <text evidence="1">Belongs to the universal ribosomal protein uL11 family.</text>
</comment>
<sequence>MPPKKKVTGLIKLQIQAGAANPAPPIGPALGQHGVNIMEFCKAYNAATEAQRGNVIPVEITVYEDRSFTFITKTPPAAELIKKAAGVAKGSATPHTAKVASLTREQVREIAQTKLADLNANDIDAAEKIIAGTARSMGVTVTD</sequence>
<accession>C5C0K9</accession>
<keyword id="KW-0488">Methylation</keyword>
<keyword id="KW-1185">Reference proteome</keyword>
<keyword id="KW-0687">Ribonucleoprotein</keyword>
<keyword id="KW-0689">Ribosomal protein</keyword>
<keyword id="KW-0694">RNA-binding</keyword>
<keyword id="KW-0699">rRNA-binding</keyword>
<protein>
    <recommendedName>
        <fullName evidence="1">Large ribosomal subunit protein uL11</fullName>
    </recommendedName>
    <alternativeName>
        <fullName evidence="2">50S ribosomal protein L11</fullName>
    </alternativeName>
</protein>
<feature type="chain" id="PRO_1000212764" description="Large ribosomal subunit protein uL11">
    <location>
        <begin position="1"/>
        <end position="143"/>
    </location>
</feature>
<name>RL11_BEUC1</name>